<feature type="chain" id="PRO_0000411696" description="Vacuolar membrane protease">
    <location>
        <begin position="1"/>
        <end position="976"/>
    </location>
</feature>
<feature type="topological domain" description="Cytoplasmic" evidence="1">
    <location>
        <begin position="1"/>
        <end position="51"/>
    </location>
</feature>
<feature type="transmembrane region" description="Helical; Name=1" evidence="3">
    <location>
        <begin position="52"/>
        <end position="72"/>
    </location>
</feature>
<feature type="topological domain" description="Vacuolar" evidence="1">
    <location>
        <begin position="73"/>
        <end position="399"/>
    </location>
</feature>
<feature type="transmembrane region" description="Helical; Name=2" evidence="3">
    <location>
        <begin position="400"/>
        <end position="420"/>
    </location>
</feature>
<feature type="topological domain" description="Cytoplasmic" evidence="1">
    <location>
        <begin position="421"/>
        <end position="427"/>
    </location>
</feature>
<feature type="transmembrane region" description="Helical; Name=3" evidence="3">
    <location>
        <begin position="428"/>
        <end position="448"/>
    </location>
</feature>
<feature type="topological domain" description="Vacuolar" evidence="1">
    <location>
        <begin position="449"/>
        <end position="477"/>
    </location>
</feature>
<feature type="transmembrane region" description="Helical; Name=4" evidence="3">
    <location>
        <begin position="478"/>
        <end position="498"/>
    </location>
</feature>
<feature type="topological domain" description="Cytoplasmic" evidence="1">
    <location>
        <begin position="499"/>
        <end position="519"/>
    </location>
</feature>
<feature type="transmembrane region" description="Helical; Name=5" evidence="3">
    <location>
        <begin position="520"/>
        <end position="540"/>
    </location>
</feature>
<feature type="topological domain" description="Vacuolar" evidence="1">
    <location>
        <begin position="541"/>
        <end position="550"/>
    </location>
</feature>
<feature type="transmembrane region" description="Helical; Name=6" evidence="3">
    <location>
        <begin position="551"/>
        <end position="571"/>
    </location>
</feature>
<feature type="topological domain" description="Cytoplasmic" evidence="1">
    <location>
        <begin position="572"/>
        <end position="675"/>
    </location>
</feature>
<feature type="transmembrane region" description="Helical; Name=7" evidence="3">
    <location>
        <begin position="676"/>
        <end position="696"/>
    </location>
</feature>
<feature type="topological domain" description="Vacuolar" evidence="1">
    <location>
        <begin position="697"/>
        <end position="718"/>
    </location>
</feature>
<feature type="transmembrane region" description="Helical; Name=8" evidence="3">
    <location>
        <begin position="719"/>
        <end position="739"/>
    </location>
</feature>
<feature type="topological domain" description="Cytoplasmic" evidence="1">
    <location>
        <begin position="740"/>
        <end position="745"/>
    </location>
</feature>
<feature type="transmembrane region" description="Helical; Name=9" evidence="3">
    <location>
        <begin position="746"/>
        <end position="766"/>
    </location>
</feature>
<feature type="topological domain" description="Vacuolar" evidence="1">
    <location>
        <begin position="767"/>
        <end position="976"/>
    </location>
</feature>
<feature type="region of interest" description="Disordered" evidence="5">
    <location>
        <begin position="590"/>
        <end position="633"/>
    </location>
</feature>
<feature type="compositionally biased region" description="Acidic residues" evidence="5">
    <location>
        <begin position="618"/>
        <end position="627"/>
    </location>
</feature>
<feature type="active site" description="Proton acceptor" evidence="2">
    <location>
        <position position="252"/>
    </location>
</feature>
<feature type="binding site" evidence="2">
    <location>
        <position position="206"/>
    </location>
    <ligand>
        <name>Zn(2+)</name>
        <dbReference type="ChEBI" id="CHEBI:29105"/>
        <label>1</label>
        <note>catalytic</note>
    </ligand>
</feature>
<feature type="binding site" evidence="2">
    <location>
        <position position="218"/>
    </location>
    <ligand>
        <name>Zn(2+)</name>
        <dbReference type="ChEBI" id="CHEBI:29105"/>
        <label>1</label>
        <note>catalytic</note>
    </ligand>
</feature>
<feature type="binding site" evidence="2">
    <location>
        <position position="218"/>
    </location>
    <ligand>
        <name>Zn(2+)</name>
        <dbReference type="ChEBI" id="CHEBI:29105"/>
        <label>2</label>
        <note>catalytic</note>
    </ligand>
</feature>
<feature type="binding site" evidence="2">
    <location>
        <position position="253"/>
    </location>
    <ligand>
        <name>Zn(2+)</name>
        <dbReference type="ChEBI" id="CHEBI:29105"/>
        <label>2</label>
        <note>catalytic</note>
    </ligand>
</feature>
<feature type="binding site" evidence="2">
    <location>
        <position position="278"/>
    </location>
    <ligand>
        <name>Zn(2+)</name>
        <dbReference type="ChEBI" id="CHEBI:29105"/>
        <label>1</label>
        <note>catalytic</note>
    </ligand>
</feature>
<feature type="binding site" evidence="2">
    <location>
        <position position="351"/>
    </location>
    <ligand>
        <name>Zn(2+)</name>
        <dbReference type="ChEBI" id="CHEBI:29105"/>
        <label>2</label>
        <note>catalytic</note>
    </ligand>
</feature>
<feature type="site" description="Transition state stabilizer" evidence="2">
    <location>
        <position position="350"/>
    </location>
</feature>
<feature type="glycosylation site" description="N-linked (GlcNAc...) asparagine" evidence="4">
    <location>
        <position position="147"/>
    </location>
</feature>
<feature type="glycosylation site" description="N-linked (GlcNAc...) asparagine" evidence="4">
    <location>
        <position position="150"/>
    </location>
</feature>
<feature type="glycosylation site" description="N-linked (GlcNAc...) asparagine" evidence="4">
    <location>
        <position position="848"/>
    </location>
</feature>
<reference key="1">
    <citation type="journal article" date="2012" name="MBio">
        <title>Comparative genome analysis of Trichophyton rubrum and related dermatophytes reveals candidate genes involved in infection.</title>
        <authorList>
            <person name="Martinez D.A."/>
            <person name="Oliver B.G."/>
            <person name="Graeser Y."/>
            <person name="Goldberg J.M."/>
            <person name="Li W."/>
            <person name="Martinez-Rossi N.M."/>
            <person name="Monod M."/>
            <person name="Shelest E."/>
            <person name="Barton R.C."/>
            <person name="Birch E."/>
            <person name="Brakhage A.A."/>
            <person name="Chen Z."/>
            <person name="Gurr S.J."/>
            <person name="Heiman D."/>
            <person name="Heitman J."/>
            <person name="Kosti I."/>
            <person name="Rossi A."/>
            <person name="Saif S."/>
            <person name="Samalova M."/>
            <person name="Saunders C.W."/>
            <person name="Shea T."/>
            <person name="Summerbell R.C."/>
            <person name="Xu J."/>
            <person name="Young S."/>
            <person name="Zeng Q."/>
            <person name="Birren B.W."/>
            <person name="Cuomo C.A."/>
            <person name="White T.C."/>
        </authorList>
    </citation>
    <scope>NUCLEOTIDE SEQUENCE [LARGE SCALE GENOMIC DNA]</scope>
    <source>
        <strain>ATCC MYA-4605 / CBS 113480</strain>
    </source>
</reference>
<proteinExistence type="inferred from homology"/>
<sequence>MPLSTGLTLSSLNVMEKADNHYNMMTKQPPALSPVDMVSSRRGFNPIAFTPWPVTILSSLVYLAFIIPIIVVHHLVPPAPKESPEGVDLKEAWHDLQHLTRQYHPYNSHSNDEVHQWLLKRIHAISASSSARSGDTTGPDIFIFDDNQTNLTFSSVGVAAKSITGVYFESKNILVYIRGAEDDQEEWWESPDGEPSGKGGVLVNAHYDSVSTGYGATDNGVGVISTLQLLKYFTTPGHYPRKGLVLLFNDGEEDFLNGAYAFSQHPLSKFTHTFLNIEGAGAGGRAVLFRSTDTEVTRFYGNTEHPFGTVLARDAFQLGFIRSETDYHVFDGVFGMRGLDVAFMEPRSRYHTDQDDARHTSIDSVWHMLSAAIKTTEGLVSYTGDAFDGDNGNDGKLNNGAGTLGVWFDFYGSSFAVFELNTLFGHSVALLVVAPLLLIATCVTLYTLDKMYMFSMYTYLSESGGQVSLYGLRGLFRFPLILGISTALTIGLAFLLMKANPFIIYSSPYAVWNPSALHRAYAFTWMFGMMWVLLVIATVYQKQHGIASSYFIVFYFAGVSIATWISYLELFGLPTTQDYARRQIRITDRTPSSDSRLLAPSADELPPSGSAAGHDFNPEDVEDEEPTESTSLLRGQQRTTFANYASARSNSDGNISTNASLHPKDHRLEQRWSINLISSAWILQFLFVAPIVIILLGQLGLFLTSATYQIGADGGSQLVIYVGIAVLSVLILLPLFPFIHRFTYHIPTFLLFVLIGTLVYNLTAFPFSHSNRLKVAFVQEIDLETGKNQASLVGVEPYIHDIVRTIPSTTGKEVSCISRGYGGRAKCSWDGLKPRVVDAPYKEWITYNISQAKDDKHTRFEISGKNTRACKILFDSPIADFKVLGSVTDERIPHTGPKGVSEIRLWSRTWENTWTVDVEWTKKNANRQGKVMCIWSDDNDLKVIPALDEIRNFAPAWAAITKLRDGLVEGSHSFKL</sequence>
<accession>C5FDH0</accession>
<gene>
    <name type="ORF">MCYG_00832</name>
</gene>
<name>PFF1_ARTOC</name>
<evidence type="ECO:0000250" key="1">
    <source>
        <dbReference type="UniProtKB" id="P38244"/>
    </source>
</evidence>
<evidence type="ECO:0000250" key="2">
    <source>
        <dbReference type="UniProtKB" id="P80561"/>
    </source>
</evidence>
<evidence type="ECO:0000255" key="3"/>
<evidence type="ECO:0000255" key="4">
    <source>
        <dbReference type="PROSITE-ProRule" id="PRU00498"/>
    </source>
</evidence>
<evidence type="ECO:0000256" key="5">
    <source>
        <dbReference type="SAM" id="MobiDB-lite"/>
    </source>
</evidence>
<evidence type="ECO:0000305" key="6"/>
<comment type="function">
    <text evidence="1">May be involved in vacuolar sorting and osmoregulation.</text>
</comment>
<comment type="cofactor">
    <cofactor evidence="2">
        <name>Zn(2+)</name>
        <dbReference type="ChEBI" id="CHEBI:29105"/>
    </cofactor>
    <text evidence="2">Binds 2 Zn(2+) ions per subunit.</text>
</comment>
<comment type="subcellular location">
    <subcellularLocation>
        <location evidence="1">Vacuole membrane</location>
        <topology evidence="3">Multi-pass membrane protein</topology>
    </subcellularLocation>
</comment>
<comment type="similarity">
    <text evidence="6">Belongs to the peptidase M28 family.</text>
</comment>
<organism>
    <name type="scientific">Arthroderma otae (strain ATCC MYA-4605 / CBS 113480)</name>
    <name type="common">Microsporum canis</name>
    <dbReference type="NCBI Taxonomy" id="554155"/>
    <lineage>
        <taxon>Eukaryota</taxon>
        <taxon>Fungi</taxon>
        <taxon>Dikarya</taxon>
        <taxon>Ascomycota</taxon>
        <taxon>Pezizomycotina</taxon>
        <taxon>Eurotiomycetes</taxon>
        <taxon>Eurotiomycetidae</taxon>
        <taxon>Onygenales</taxon>
        <taxon>Arthrodermataceae</taxon>
        <taxon>Microsporum</taxon>
    </lineage>
</organism>
<dbReference type="EC" id="3.4.-.-" evidence="6"/>
<dbReference type="EMBL" id="DS995701">
    <property type="protein sequence ID" value="EEQ27944.1"/>
    <property type="molecule type" value="Genomic_DNA"/>
</dbReference>
<dbReference type="RefSeq" id="XP_002850728.1">
    <property type="nucleotide sequence ID" value="XM_002850682.1"/>
</dbReference>
<dbReference type="SMR" id="C5FDH0"/>
<dbReference type="STRING" id="554155.C5FDH0"/>
<dbReference type="GeneID" id="9226658"/>
<dbReference type="VEuPathDB" id="FungiDB:MCYG_00832"/>
<dbReference type="eggNOG" id="KOG2194">
    <property type="taxonomic scope" value="Eukaryota"/>
</dbReference>
<dbReference type="HOGENOM" id="CLU_006412_1_0_1"/>
<dbReference type="OMA" id="TPWPVTI"/>
<dbReference type="OrthoDB" id="10257471at2759"/>
<dbReference type="Proteomes" id="UP000002035">
    <property type="component" value="Unassembled WGS sequence"/>
</dbReference>
<dbReference type="GO" id="GO:0005774">
    <property type="term" value="C:vacuolar membrane"/>
    <property type="evidence" value="ECO:0007669"/>
    <property type="project" value="UniProtKB-SubCell"/>
</dbReference>
<dbReference type="GO" id="GO:0046872">
    <property type="term" value="F:metal ion binding"/>
    <property type="evidence" value="ECO:0007669"/>
    <property type="project" value="UniProtKB-KW"/>
</dbReference>
<dbReference type="GO" id="GO:0008235">
    <property type="term" value="F:metalloexopeptidase activity"/>
    <property type="evidence" value="ECO:0007669"/>
    <property type="project" value="InterPro"/>
</dbReference>
<dbReference type="GO" id="GO:0006508">
    <property type="term" value="P:proteolysis"/>
    <property type="evidence" value="ECO:0007669"/>
    <property type="project" value="UniProtKB-KW"/>
</dbReference>
<dbReference type="CDD" id="cd03875">
    <property type="entry name" value="M28_Fxna_like"/>
    <property type="match status" value="1"/>
</dbReference>
<dbReference type="FunFam" id="3.40.630.10:FF:000057">
    <property type="entry name" value="Vacuolar membrane protease"/>
    <property type="match status" value="1"/>
</dbReference>
<dbReference type="Gene3D" id="3.40.630.10">
    <property type="entry name" value="Zn peptidases"/>
    <property type="match status" value="1"/>
</dbReference>
<dbReference type="InterPro" id="IPR048024">
    <property type="entry name" value="Fxna-like_M28_dom"/>
</dbReference>
<dbReference type="InterPro" id="IPR045175">
    <property type="entry name" value="M28_fam"/>
</dbReference>
<dbReference type="InterPro" id="IPR007484">
    <property type="entry name" value="Peptidase_M28"/>
</dbReference>
<dbReference type="InterPro" id="IPR053975">
    <property type="entry name" value="PFF1_C"/>
</dbReference>
<dbReference type="InterPro" id="IPR053976">
    <property type="entry name" value="PFF1_TM"/>
</dbReference>
<dbReference type="PANTHER" id="PTHR12147">
    <property type="entry name" value="METALLOPEPTIDASE M28 FAMILY MEMBER"/>
    <property type="match status" value="1"/>
</dbReference>
<dbReference type="PANTHER" id="PTHR12147:SF58">
    <property type="entry name" value="VACUOLAR MEMBRANE PROTEASE"/>
    <property type="match status" value="1"/>
</dbReference>
<dbReference type="Pfam" id="PF04389">
    <property type="entry name" value="Peptidase_M28"/>
    <property type="match status" value="1"/>
</dbReference>
<dbReference type="Pfam" id="PF22250">
    <property type="entry name" value="PFF1_C"/>
    <property type="match status" value="1"/>
</dbReference>
<dbReference type="Pfam" id="PF22251">
    <property type="entry name" value="PFF1_TM"/>
    <property type="match status" value="1"/>
</dbReference>
<dbReference type="SUPFAM" id="SSF53187">
    <property type="entry name" value="Zn-dependent exopeptidases"/>
    <property type="match status" value="1"/>
</dbReference>
<protein>
    <recommendedName>
        <fullName evidence="1">Vacuolar membrane protease</fullName>
        <ecNumber evidence="6">3.4.-.-</ecNumber>
    </recommendedName>
    <alternativeName>
        <fullName evidence="1">FXNA-related family protease 1</fullName>
    </alternativeName>
</protein>
<keyword id="KW-0325">Glycoprotein</keyword>
<keyword id="KW-0378">Hydrolase</keyword>
<keyword id="KW-0472">Membrane</keyword>
<keyword id="KW-0479">Metal-binding</keyword>
<keyword id="KW-0482">Metalloprotease</keyword>
<keyword id="KW-0645">Protease</keyword>
<keyword id="KW-1185">Reference proteome</keyword>
<keyword id="KW-0812">Transmembrane</keyword>
<keyword id="KW-1133">Transmembrane helix</keyword>
<keyword id="KW-0926">Vacuole</keyword>
<keyword id="KW-0862">Zinc</keyword>